<organism>
    <name type="scientific">Pasteurella multocida (strain Pm70)</name>
    <dbReference type="NCBI Taxonomy" id="272843"/>
    <lineage>
        <taxon>Bacteria</taxon>
        <taxon>Pseudomonadati</taxon>
        <taxon>Pseudomonadota</taxon>
        <taxon>Gammaproteobacteria</taxon>
        <taxon>Pasteurellales</taxon>
        <taxon>Pasteurellaceae</taxon>
        <taxon>Pasteurella</taxon>
    </lineage>
</organism>
<feature type="chain" id="PRO_0000359013" description="Acetyl-coenzyme A carboxylase carboxyl transferase subunit beta">
    <location>
        <begin position="1"/>
        <end position="304"/>
    </location>
</feature>
<feature type="domain" description="CoA carboxyltransferase N-terminal" evidence="2">
    <location>
        <begin position="26"/>
        <end position="295"/>
    </location>
</feature>
<feature type="zinc finger region" description="C4-type" evidence="1">
    <location>
        <begin position="30"/>
        <end position="52"/>
    </location>
</feature>
<feature type="region of interest" description="Disordered" evidence="3">
    <location>
        <begin position="281"/>
        <end position="304"/>
    </location>
</feature>
<feature type="binding site" evidence="1">
    <location>
        <position position="30"/>
    </location>
    <ligand>
        <name>Zn(2+)</name>
        <dbReference type="ChEBI" id="CHEBI:29105"/>
    </ligand>
</feature>
<feature type="binding site" evidence="1">
    <location>
        <position position="33"/>
    </location>
    <ligand>
        <name>Zn(2+)</name>
        <dbReference type="ChEBI" id="CHEBI:29105"/>
    </ligand>
</feature>
<feature type="binding site" evidence="1">
    <location>
        <position position="49"/>
    </location>
    <ligand>
        <name>Zn(2+)</name>
        <dbReference type="ChEBI" id="CHEBI:29105"/>
    </ligand>
</feature>
<feature type="binding site" evidence="1">
    <location>
        <position position="52"/>
    </location>
    <ligand>
        <name>Zn(2+)</name>
        <dbReference type="ChEBI" id="CHEBI:29105"/>
    </ligand>
</feature>
<name>ACCD_PASMU</name>
<gene>
    <name evidence="1" type="primary">accD</name>
    <name type="ordered locus">PM0636</name>
</gene>
<dbReference type="EC" id="2.1.3.15" evidence="1"/>
<dbReference type="EMBL" id="AE004439">
    <property type="protein sequence ID" value="AAK02720.1"/>
    <property type="molecule type" value="Genomic_DNA"/>
</dbReference>
<dbReference type="RefSeq" id="WP_005751483.1">
    <property type="nucleotide sequence ID" value="NC_002663.1"/>
</dbReference>
<dbReference type="SMR" id="Q9CN12"/>
<dbReference type="STRING" id="272843.PM0636"/>
<dbReference type="EnsemblBacteria" id="AAK02720">
    <property type="protein sequence ID" value="AAK02720"/>
    <property type="gene ID" value="PM0636"/>
</dbReference>
<dbReference type="GeneID" id="77208016"/>
<dbReference type="KEGG" id="pmu:PM0636"/>
<dbReference type="HOGENOM" id="CLU_015486_1_0_6"/>
<dbReference type="OrthoDB" id="9772975at2"/>
<dbReference type="UniPathway" id="UPA00655">
    <property type="reaction ID" value="UER00711"/>
</dbReference>
<dbReference type="Proteomes" id="UP000000809">
    <property type="component" value="Chromosome"/>
</dbReference>
<dbReference type="GO" id="GO:0009329">
    <property type="term" value="C:acetate CoA-transferase complex"/>
    <property type="evidence" value="ECO:0007669"/>
    <property type="project" value="TreeGrafter"/>
</dbReference>
<dbReference type="GO" id="GO:0003989">
    <property type="term" value="F:acetyl-CoA carboxylase activity"/>
    <property type="evidence" value="ECO:0007669"/>
    <property type="project" value="InterPro"/>
</dbReference>
<dbReference type="GO" id="GO:0005524">
    <property type="term" value="F:ATP binding"/>
    <property type="evidence" value="ECO:0007669"/>
    <property type="project" value="UniProtKB-KW"/>
</dbReference>
<dbReference type="GO" id="GO:0016743">
    <property type="term" value="F:carboxyl- or carbamoyltransferase activity"/>
    <property type="evidence" value="ECO:0007669"/>
    <property type="project" value="UniProtKB-UniRule"/>
</dbReference>
<dbReference type="GO" id="GO:0008270">
    <property type="term" value="F:zinc ion binding"/>
    <property type="evidence" value="ECO:0007669"/>
    <property type="project" value="UniProtKB-UniRule"/>
</dbReference>
<dbReference type="GO" id="GO:0006633">
    <property type="term" value="P:fatty acid biosynthetic process"/>
    <property type="evidence" value="ECO:0007669"/>
    <property type="project" value="UniProtKB-KW"/>
</dbReference>
<dbReference type="GO" id="GO:2001295">
    <property type="term" value="P:malonyl-CoA biosynthetic process"/>
    <property type="evidence" value="ECO:0007669"/>
    <property type="project" value="UniProtKB-UniRule"/>
</dbReference>
<dbReference type="Gene3D" id="3.90.226.10">
    <property type="entry name" value="2-enoyl-CoA Hydratase, Chain A, domain 1"/>
    <property type="match status" value="1"/>
</dbReference>
<dbReference type="HAMAP" id="MF_01395">
    <property type="entry name" value="AcetylCoA_CT_beta"/>
    <property type="match status" value="1"/>
</dbReference>
<dbReference type="InterPro" id="IPR034733">
    <property type="entry name" value="AcCoA_carboxyl_beta"/>
</dbReference>
<dbReference type="InterPro" id="IPR000438">
    <property type="entry name" value="Acetyl_CoA_COase_Trfase_b_su"/>
</dbReference>
<dbReference type="InterPro" id="IPR029045">
    <property type="entry name" value="ClpP/crotonase-like_dom_sf"/>
</dbReference>
<dbReference type="InterPro" id="IPR011762">
    <property type="entry name" value="COA_CT_N"/>
</dbReference>
<dbReference type="InterPro" id="IPR041010">
    <property type="entry name" value="Znf-ACC"/>
</dbReference>
<dbReference type="NCBIfam" id="TIGR00515">
    <property type="entry name" value="accD"/>
    <property type="match status" value="1"/>
</dbReference>
<dbReference type="PANTHER" id="PTHR42995">
    <property type="entry name" value="ACETYL-COENZYME A CARBOXYLASE CARBOXYL TRANSFERASE SUBUNIT BETA, CHLOROPLASTIC"/>
    <property type="match status" value="1"/>
</dbReference>
<dbReference type="PANTHER" id="PTHR42995:SF5">
    <property type="entry name" value="ACETYL-COENZYME A CARBOXYLASE CARBOXYL TRANSFERASE SUBUNIT BETA, CHLOROPLASTIC"/>
    <property type="match status" value="1"/>
</dbReference>
<dbReference type="Pfam" id="PF01039">
    <property type="entry name" value="Carboxyl_trans"/>
    <property type="match status" value="1"/>
</dbReference>
<dbReference type="Pfam" id="PF17848">
    <property type="entry name" value="Zn_ribbon_ACC"/>
    <property type="match status" value="1"/>
</dbReference>
<dbReference type="PRINTS" id="PR01070">
    <property type="entry name" value="ACCCTRFRASEB"/>
</dbReference>
<dbReference type="SUPFAM" id="SSF52096">
    <property type="entry name" value="ClpP/crotonase"/>
    <property type="match status" value="1"/>
</dbReference>
<dbReference type="PROSITE" id="PS50980">
    <property type="entry name" value="COA_CT_NTER"/>
    <property type="match status" value="1"/>
</dbReference>
<sequence>MSWIDRIFNKDTSSTSSRKANVPEGVWTKCTSCEQVLYRDELRRHLEVCPKCGHHMRIDARERLLALLDKDSSQELSAELEPKDILKFKDLKKYKDRISAAQKETGEKDALISMFGTLYGMPIVAAASNFSFMGGSMGSVVGAKFVQAAEKAIAENCPFVCFSASGGARMQEALFSLMQMAKTSAVLAKMREQGVPFISVLTDPTLGGVSASFAMLGDINIAEPKALIGFAGPRVIEQTVREKLPEGFQRSEFLLEKGAIDMIVKRADMRHTLASVLSKLSNKPSPFVEPELVENEEQSKSDNE</sequence>
<reference key="1">
    <citation type="journal article" date="2001" name="Proc. Natl. Acad. Sci. U.S.A.">
        <title>Complete genomic sequence of Pasteurella multocida Pm70.</title>
        <authorList>
            <person name="May B.J."/>
            <person name="Zhang Q."/>
            <person name="Li L.L."/>
            <person name="Paustian M.L."/>
            <person name="Whittam T.S."/>
            <person name="Kapur V."/>
        </authorList>
    </citation>
    <scope>NUCLEOTIDE SEQUENCE [LARGE SCALE GENOMIC DNA]</scope>
    <source>
        <strain>Pm70</strain>
    </source>
</reference>
<proteinExistence type="inferred from homology"/>
<protein>
    <recommendedName>
        <fullName evidence="1">Acetyl-coenzyme A carboxylase carboxyl transferase subunit beta</fullName>
        <shortName evidence="1">ACCase subunit beta</shortName>
        <shortName evidence="1">Acetyl-CoA carboxylase carboxyltransferase subunit beta</shortName>
        <ecNumber evidence="1">2.1.3.15</ecNumber>
    </recommendedName>
</protein>
<keyword id="KW-0067">ATP-binding</keyword>
<keyword id="KW-0963">Cytoplasm</keyword>
<keyword id="KW-0275">Fatty acid biosynthesis</keyword>
<keyword id="KW-0276">Fatty acid metabolism</keyword>
<keyword id="KW-0444">Lipid biosynthesis</keyword>
<keyword id="KW-0443">Lipid metabolism</keyword>
<keyword id="KW-0479">Metal-binding</keyword>
<keyword id="KW-0547">Nucleotide-binding</keyword>
<keyword id="KW-1185">Reference proteome</keyword>
<keyword id="KW-0808">Transferase</keyword>
<keyword id="KW-0862">Zinc</keyword>
<keyword id="KW-0863">Zinc-finger</keyword>
<comment type="function">
    <text evidence="1">Component of the acetyl coenzyme A carboxylase (ACC) complex. Biotin carboxylase (BC) catalyzes the carboxylation of biotin on its carrier protein (BCCP) and then the CO(2) group is transferred by the transcarboxylase to acetyl-CoA to form malonyl-CoA.</text>
</comment>
<comment type="catalytic activity">
    <reaction evidence="1">
        <text>N(6)-carboxybiotinyl-L-lysyl-[protein] + acetyl-CoA = N(6)-biotinyl-L-lysyl-[protein] + malonyl-CoA</text>
        <dbReference type="Rhea" id="RHEA:54728"/>
        <dbReference type="Rhea" id="RHEA-COMP:10505"/>
        <dbReference type="Rhea" id="RHEA-COMP:10506"/>
        <dbReference type="ChEBI" id="CHEBI:57288"/>
        <dbReference type="ChEBI" id="CHEBI:57384"/>
        <dbReference type="ChEBI" id="CHEBI:83144"/>
        <dbReference type="ChEBI" id="CHEBI:83145"/>
        <dbReference type="EC" id="2.1.3.15"/>
    </reaction>
</comment>
<comment type="cofactor">
    <cofactor evidence="1">
        <name>Zn(2+)</name>
        <dbReference type="ChEBI" id="CHEBI:29105"/>
    </cofactor>
    <text evidence="1">Binds 1 zinc ion per subunit.</text>
</comment>
<comment type="pathway">
    <text evidence="1">Lipid metabolism; malonyl-CoA biosynthesis; malonyl-CoA from acetyl-CoA: step 1/1.</text>
</comment>
<comment type="subunit">
    <text evidence="1">Acetyl-CoA carboxylase is a heterohexamer composed of biotin carboxyl carrier protein (AccB), biotin carboxylase (AccC) and two subunits each of ACCase subunit alpha (AccA) and ACCase subunit beta (AccD).</text>
</comment>
<comment type="subcellular location">
    <subcellularLocation>
        <location evidence="1">Cytoplasm</location>
    </subcellularLocation>
</comment>
<comment type="similarity">
    <text evidence="1">Belongs to the AccD/PCCB family.</text>
</comment>
<evidence type="ECO:0000255" key="1">
    <source>
        <dbReference type="HAMAP-Rule" id="MF_01395"/>
    </source>
</evidence>
<evidence type="ECO:0000255" key="2">
    <source>
        <dbReference type="PROSITE-ProRule" id="PRU01136"/>
    </source>
</evidence>
<evidence type="ECO:0000256" key="3">
    <source>
        <dbReference type="SAM" id="MobiDB-lite"/>
    </source>
</evidence>
<accession>Q9CN12</accession>